<proteinExistence type="evidence at protein level"/>
<protein>
    <recommendedName>
        <fullName>Ig kappa-B5 chain V region 2699</fullName>
    </recommendedName>
</protein>
<reference key="1">
    <citation type="journal article" date="1983" name="Biochemistry">
        <title>Partial amino acid sequence of a rabbit immunoglobulin light chain of allotype b5.</title>
        <authorList>
            <person name="Ayadi H."/>
            <person name="Dutka S."/>
            <person name="Paroutaud P."/>
            <person name="Strosberg A.D."/>
        </authorList>
    </citation>
    <scope>PROTEIN SEQUENCE</scope>
</reference>
<feature type="chain" id="PRO_0000059729" description="Ig kappa-B5 chain V region 2699">
    <location>
        <begin position="1"/>
        <end position="94" status="greater than"/>
    </location>
</feature>
<feature type="region of interest" description="Framework-1">
    <location>
        <begin position="1"/>
        <end position="23"/>
    </location>
</feature>
<feature type="region of interest" description="Complementarity-determining-1">
    <location>
        <begin position="24"/>
        <end position="34"/>
    </location>
</feature>
<feature type="region of interest" description="Framework-2">
    <location>
        <begin position="35"/>
        <end position="49"/>
    </location>
</feature>
<feature type="region of interest" description="Complementarity-determining-2">
    <location>
        <begin position="50"/>
        <end position="56"/>
    </location>
</feature>
<feature type="region of interest" description="Framework-3">
    <location>
        <begin position="57"/>
        <end position="82" status="greater than"/>
    </location>
</feature>
<feature type="region of interest" description="Complementarity-determining-3">
    <location>
        <begin position="83" status="less than"/>
        <end position="83"/>
    </location>
</feature>
<feature type="region of interest" description="Framework-4">
    <location>
        <begin position="84"/>
        <end position="93"/>
    </location>
</feature>
<feature type="sequence variant">
    <original>P</original>
    <variation>A</variation>
    <location>
        <position position="8"/>
    </location>
</feature>
<feature type="sequence variant">
    <original>N</original>
    <variation>K</variation>
    <location>
        <position position="22"/>
    </location>
</feature>
<feature type="non-consecutive residues" evidence="1">
    <location>
        <begin position="82"/>
        <end position="83"/>
    </location>
</feature>
<feature type="non-terminal residue">
    <location>
        <position position="94"/>
    </location>
</feature>
<organism>
    <name type="scientific">Oryctolagus cuniculus</name>
    <name type="common">Rabbit</name>
    <dbReference type="NCBI Taxonomy" id="9986"/>
    <lineage>
        <taxon>Eukaryota</taxon>
        <taxon>Metazoa</taxon>
        <taxon>Chordata</taxon>
        <taxon>Craniata</taxon>
        <taxon>Vertebrata</taxon>
        <taxon>Euteleostomi</taxon>
        <taxon>Mammalia</taxon>
        <taxon>Eutheria</taxon>
        <taxon>Euarchontoglires</taxon>
        <taxon>Glires</taxon>
        <taxon>Lagomorpha</taxon>
        <taxon>Leporidae</taxon>
        <taxon>Oryctolagus</taxon>
    </lineage>
</organism>
<keyword id="KW-1064">Adaptive immunity</keyword>
<keyword id="KW-0903">Direct protein sequencing</keyword>
<keyword id="KW-0391">Immunity</keyword>
<keyword id="KW-1280">Immunoglobulin</keyword>
<keyword id="KW-1185">Reference proteome</keyword>
<name>KV11_RABIT</name>
<dbReference type="PIR" id="A01955">
    <property type="entry name" value="A01955"/>
</dbReference>
<dbReference type="SMR" id="P01692"/>
<dbReference type="InParanoid" id="P01692"/>
<dbReference type="Proteomes" id="UP000001811">
    <property type="component" value="Unplaced"/>
</dbReference>
<dbReference type="GO" id="GO:0019814">
    <property type="term" value="C:immunoglobulin complex"/>
    <property type="evidence" value="ECO:0007669"/>
    <property type="project" value="UniProtKB-KW"/>
</dbReference>
<dbReference type="GO" id="GO:0002250">
    <property type="term" value="P:adaptive immune response"/>
    <property type="evidence" value="ECO:0007669"/>
    <property type="project" value="UniProtKB-KW"/>
</dbReference>
<dbReference type="Gene3D" id="2.60.40.10">
    <property type="entry name" value="Immunoglobulins"/>
    <property type="match status" value="1"/>
</dbReference>
<dbReference type="InterPro" id="IPR036179">
    <property type="entry name" value="Ig-like_dom_sf"/>
</dbReference>
<dbReference type="InterPro" id="IPR013783">
    <property type="entry name" value="Ig-like_fold"/>
</dbReference>
<dbReference type="InterPro" id="IPR013106">
    <property type="entry name" value="Ig_V-set"/>
</dbReference>
<dbReference type="InterPro" id="IPR050150">
    <property type="entry name" value="IgV_Light_Chain"/>
</dbReference>
<dbReference type="PANTHER" id="PTHR23267">
    <property type="entry name" value="IMMUNOGLOBULIN LIGHT CHAIN"/>
    <property type="match status" value="1"/>
</dbReference>
<dbReference type="Pfam" id="PF07686">
    <property type="entry name" value="V-set"/>
    <property type="match status" value="1"/>
</dbReference>
<dbReference type="SMART" id="SM00406">
    <property type="entry name" value="IGv"/>
    <property type="match status" value="1"/>
</dbReference>
<dbReference type="SUPFAM" id="SSF48726">
    <property type="entry name" value="Immunoglobulin"/>
    <property type="match status" value="1"/>
</dbReference>
<sequence>AFELTQTPSSVEAAVGGTVTINCQASTDISSNLAWYTPKPGSPPKLLIYSASTLASGVSSRFKGSGSGVLITLTISDLECGVSFGGGTKVVVEV</sequence>
<accession>P01692</accession>
<comment type="miscellaneous">
    <text>This chain is an antibody to pneumococcus strain III vaccine.</text>
</comment>
<evidence type="ECO:0000305" key="1"/>